<keyword id="KW-0560">Oxidoreductase</keyword>
<keyword id="KW-0663">Pyridoxal phosphate</keyword>
<name>GCSPB_ENDTX</name>
<protein>
    <recommendedName>
        <fullName evidence="1">Probable glycine dehydrogenase (decarboxylating) subunit 2</fullName>
        <ecNumber evidence="1">1.4.4.2</ecNumber>
    </recommendedName>
    <alternativeName>
        <fullName evidence="1">Glycine cleavage system P-protein subunit 2</fullName>
    </alternativeName>
    <alternativeName>
        <fullName evidence="1">Glycine decarboxylase subunit 2</fullName>
    </alternativeName>
    <alternativeName>
        <fullName evidence="1">Glycine dehydrogenase (aminomethyl-transferring) subunit 2</fullName>
    </alternativeName>
</protein>
<organism>
    <name type="scientific">Endomicrobium trichonymphae</name>
    <dbReference type="NCBI Taxonomy" id="1408204"/>
    <lineage>
        <taxon>Bacteria</taxon>
        <taxon>Pseudomonadati</taxon>
        <taxon>Elusimicrobiota</taxon>
        <taxon>Endomicrobiia</taxon>
        <taxon>Endomicrobiales</taxon>
        <taxon>Endomicrobiaceae</taxon>
        <taxon>Candidatus Endomicrobiellum</taxon>
    </lineage>
</organism>
<comment type="function">
    <text evidence="1">The glycine cleavage system catalyzes the degradation of glycine. The P protein binds the alpha-amino group of glycine through its pyridoxal phosphate cofactor; CO(2) is released and the remaining methylamine moiety is then transferred to the lipoamide cofactor of the H protein.</text>
</comment>
<comment type="catalytic activity">
    <reaction evidence="1">
        <text>N(6)-[(R)-lipoyl]-L-lysyl-[glycine-cleavage complex H protein] + glycine + H(+) = N(6)-[(R)-S(8)-aminomethyldihydrolipoyl]-L-lysyl-[glycine-cleavage complex H protein] + CO2</text>
        <dbReference type="Rhea" id="RHEA:24304"/>
        <dbReference type="Rhea" id="RHEA-COMP:10494"/>
        <dbReference type="Rhea" id="RHEA-COMP:10495"/>
        <dbReference type="ChEBI" id="CHEBI:15378"/>
        <dbReference type="ChEBI" id="CHEBI:16526"/>
        <dbReference type="ChEBI" id="CHEBI:57305"/>
        <dbReference type="ChEBI" id="CHEBI:83099"/>
        <dbReference type="ChEBI" id="CHEBI:83143"/>
        <dbReference type="EC" id="1.4.4.2"/>
    </reaction>
</comment>
<comment type="cofactor">
    <cofactor evidence="1">
        <name>pyridoxal 5'-phosphate</name>
        <dbReference type="ChEBI" id="CHEBI:597326"/>
    </cofactor>
</comment>
<comment type="subunit">
    <text evidence="1">The glycine cleavage system is composed of four proteins: P, T, L and H. In this organism, the P 'protein' is a heterodimer of two subunits.</text>
</comment>
<comment type="similarity">
    <text evidence="1">Belongs to the GcvP family. C-terminal subunit subfamily.</text>
</comment>
<gene>
    <name evidence="1" type="primary">gcvPB</name>
    <name type="ordered locus">TGRD_718</name>
</gene>
<proteinExistence type="inferred from homology"/>
<reference key="1">
    <citation type="journal article" date="2008" name="Proc. Natl. Acad. Sci. U.S.A.">
        <title>Complete genome of the uncultured termite group 1 bacteria in a single host protist cell.</title>
        <authorList>
            <person name="Hongoh Y."/>
            <person name="Sharma V.K."/>
            <person name="Prakash T."/>
            <person name="Noda S."/>
            <person name="Taylor T.D."/>
            <person name="Kudo T."/>
            <person name="Sakaki Y."/>
            <person name="Toyoda A."/>
            <person name="Hattori M."/>
            <person name="Ohkuma M."/>
        </authorList>
    </citation>
    <scope>NUCLEOTIDE SEQUENCE [LARGE SCALE GENOMIC DNA]</scope>
</reference>
<evidence type="ECO:0000255" key="1">
    <source>
        <dbReference type="HAMAP-Rule" id="MF_00713"/>
    </source>
</evidence>
<dbReference type="EC" id="1.4.4.2" evidence="1"/>
<dbReference type="EMBL" id="AP009510">
    <property type="protein sequence ID" value="BAG14201.1"/>
    <property type="molecule type" value="Genomic_DNA"/>
</dbReference>
<dbReference type="RefSeq" id="WP_015423722.1">
    <property type="nucleotide sequence ID" value="NC_020419.1"/>
</dbReference>
<dbReference type="SMR" id="B1GYV8"/>
<dbReference type="STRING" id="471821.TGRD_718"/>
<dbReference type="KEGG" id="rsd:TGRD_718"/>
<dbReference type="PATRIC" id="fig|471821.5.peg.1230"/>
<dbReference type="HOGENOM" id="CLU_004620_5_0_0"/>
<dbReference type="Proteomes" id="UP000001691">
    <property type="component" value="Chromosome"/>
</dbReference>
<dbReference type="GO" id="GO:0005829">
    <property type="term" value="C:cytosol"/>
    <property type="evidence" value="ECO:0007669"/>
    <property type="project" value="TreeGrafter"/>
</dbReference>
<dbReference type="GO" id="GO:0005960">
    <property type="term" value="C:glycine cleavage complex"/>
    <property type="evidence" value="ECO:0007669"/>
    <property type="project" value="TreeGrafter"/>
</dbReference>
<dbReference type="GO" id="GO:0016594">
    <property type="term" value="F:glycine binding"/>
    <property type="evidence" value="ECO:0007669"/>
    <property type="project" value="TreeGrafter"/>
</dbReference>
<dbReference type="GO" id="GO:0004375">
    <property type="term" value="F:glycine dehydrogenase (decarboxylating) activity"/>
    <property type="evidence" value="ECO:0007669"/>
    <property type="project" value="UniProtKB-EC"/>
</dbReference>
<dbReference type="GO" id="GO:0030170">
    <property type="term" value="F:pyridoxal phosphate binding"/>
    <property type="evidence" value="ECO:0007669"/>
    <property type="project" value="TreeGrafter"/>
</dbReference>
<dbReference type="GO" id="GO:0019464">
    <property type="term" value="P:glycine decarboxylation via glycine cleavage system"/>
    <property type="evidence" value="ECO:0007669"/>
    <property type="project" value="UniProtKB-UniRule"/>
</dbReference>
<dbReference type="FunFam" id="3.40.640.10:FF:000224">
    <property type="entry name" value="Probable glycine dehydrogenase (decarboxylating) subunit 2"/>
    <property type="match status" value="1"/>
</dbReference>
<dbReference type="FunFam" id="3.90.1150.10:FF:000014">
    <property type="entry name" value="Probable glycine dehydrogenase (decarboxylating) subunit 2"/>
    <property type="match status" value="1"/>
</dbReference>
<dbReference type="Gene3D" id="6.20.440.10">
    <property type="match status" value="1"/>
</dbReference>
<dbReference type="Gene3D" id="3.90.1150.10">
    <property type="entry name" value="Aspartate Aminotransferase, domain 1"/>
    <property type="match status" value="1"/>
</dbReference>
<dbReference type="Gene3D" id="3.40.640.10">
    <property type="entry name" value="Type I PLP-dependent aspartate aminotransferase-like (Major domain)"/>
    <property type="match status" value="1"/>
</dbReference>
<dbReference type="HAMAP" id="MF_00713">
    <property type="entry name" value="GcvPB"/>
    <property type="match status" value="1"/>
</dbReference>
<dbReference type="InterPro" id="IPR023012">
    <property type="entry name" value="GcvPB"/>
</dbReference>
<dbReference type="InterPro" id="IPR049316">
    <property type="entry name" value="GDC-P_C"/>
</dbReference>
<dbReference type="InterPro" id="IPR049315">
    <property type="entry name" value="GDC-P_N"/>
</dbReference>
<dbReference type="InterPro" id="IPR020581">
    <property type="entry name" value="GDC_P"/>
</dbReference>
<dbReference type="InterPro" id="IPR015424">
    <property type="entry name" value="PyrdxlP-dep_Trfase"/>
</dbReference>
<dbReference type="InterPro" id="IPR015421">
    <property type="entry name" value="PyrdxlP-dep_Trfase_major"/>
</dbReference>
<dbReference type="InterPro" id="IPR015422">
    <property type="entry name" value="PyrdxlP-dep_Trfase_small"/>
</dbReference>
<dbReference type="NCBIfam" id="NF003346">
    <property type="entry name" value="PRK04366.1"/>
    <property type="match status" value="1"/>
</dbReference>
<dbReference type="PANTHER" id="PTHR11773:SF1">
    <property type="entry name" value="GLYCINE DEHYDROGENASE (DECARBOXYLATING), MITOCHONDRIAL"/>
    <property type="match status" value="1"/>
</dbReference>
<dbReference type="PANTHER" id="PTHR11773">
    <property type="entry name" value="GLYCINE DEHYDROGENASE, DECARBOXYLATING"/>
    <property type="match status" value="1"/>
</dbReference>
<dbReference type="Pfam" id="PF21478">
    <property type="entry name" value="GcvP2_C"/>
    <property type="match status" value="1"/>
</dbReference>
<dbReference type="Pfam" id="PF02347">
    <property type="entry name" value="GDC-P"/>
    <property type="match status" value="1"/>
</dbReference>
<dbReference type="SUPFAM" id="SSF53383">
    <property type="entry name" value="PLP-dependent transferases"/>
    <property type="match status" value="1"/>
</dbReference>
<sequence>MEKLLNELSSENRPAYSVDSDVEIDAQIPENLKRSSGLGLPSITENDLSRHFTNLSRKNYALSTSFYPLGSCTMKYNPLINERVAKNEAFNFIHPYQPGKSMQGVLKIMYELEKDLCEISGMDCFSLQQAAGAHGEFTGLLIIAKYFKSIKQKRTKIIIPDTAHGTNPASAALAGFGTVSLKSESDGSILPEKLKKILTPEIAAVMLTVPNTLGAFEKNIPEISRIVHENGSLLYYDGANLNAVMGIVRPGDMGFDVMHINLHKTFSTPHGGGGPGSGPVGVKEFLEPFLPVPKIESRKSKFVLNYKKPKSIGKLKAFLGNFPVILKAYVYIKSLGAEGLKNVSEWAVLNANYMLARFKDKIDVPAGSRCMHEFVLSPKSLFKNNVKTLDVAKRLLDYGYYAPTIYFPLIVEEAVMLEPTETESKETMDAFIDTLIKIIYEEATQEPQKLKEAPFNTSVRRLNEVEAARNPVLKWKKA</sequence>
<feature type="chain" id="PRO_1000148003" description="Probable glycine dehydrogenase (decarboxylating) subunit 2">
    <location>
        <begin position="1"/>
        <end position="478"/>
    </location>
</feature>
<feature type="modified residue" description="N6-(pyridoxal phosphate)lysine" evidence="1">
    <location>
        <position position="264"/>
    </location>
</feature>
<accession>B1GYV8</accession>